<accession>A4FX98</accession>
<gene>
    <name type="ordered locus">MmarC5_0513</name>
</gene>
<proteinExistence type="inferred from homology"/>
<organism>
    <name type="scientific">Methanococcus maripaludis (strain C5 / ATCC BAA-1333)</name>
    <dbReference type="NCBI Taxonomy" id="402880"/>
    <lineage>
        <taxon>Archaea</taxon>
        <taxon>Methanobacteriati</taxon>
        <taxon>Methanobacteriota</taxon>
        <taxon>Methanomada group</taxon>
        <taxon>Methanococci</taxon>
        <taxon>Methanococcales</taxon>
        <taxon>Methanococcaceae</taxon>
        <taxon>Methanococcus</taxon>
    </lineage>
</organism>
<name>GLMU_METM5</name>
<feature type="chain" id="PRO_0000337829" description="Bifunctional protein GlmU">
    <location>
        <begin position="1"/>
        <end position="411"/>
    </location>
</feature>
<feature type="region of interest" description="Pyrophosphorylase">
    <location>
        <begin position="1"/>
        <end position="204"/>
    </location>
</feature>
<feature type="region of interest" description="Linker">
    <location>
        <begin position="205"/>
        <end position="224"/>
    </location>
</feature>
<feature type="region of interest" description="N-acetyltransferase">
    <location>
        <begin position="225"/>
        <end position="411"/>
    </location>
</feature>
<feature type="active site" description="Proton acceptor" evidence="1">
    <location>
        <position position="308"/>
    </location>
</feature>
<feature type="binding site" evidence="1">
    <location>
        <begin position="6"/>
        <end position="9"/>
    </location>
    <ligand>
        <name>UTP</name>
        <dbReference type="ChEBI" id="CHEBI:46398"/>
    </ligand>
</feature>
<feature type="binding site" evidence="1">
    <location>
        <position position="74"/>
    </location>
    <ligand>
        <name>UTP</name>
        <dbReference type="ChEBI" id="CHEBI:46398"/>
    </ligand>
</feature>
<feature type="binding site" evidence="1">
    <location>
        <position position="79"/>
    </location>
    <ligand>
        <name>UTP</name>
        <dbReference type="ChEBI" id="CHEBI:46398"/>
    </ligand>
</feature>
<feature type="binding site" evidence="1">
    <location>
        <position position="80"/>
    </location>
    <ligand>
        <name>N-acetyl-alpha-D-glucosamine 1-phosphate</name>
        <dbReference type="ChEBI" id="CHEBI:57776"/>
    </ligand>
</feature>
<feature type="binding site" evidence="1">
    <location>
        <position position="130"/>
    </location>
    <ligand>
        <name>N-acetyl-alpha-D-glucosamine 1-phosphate</name>
        <dbReference type="ChEBI" id="CHEBI:57776"/>
    </ligand>
</feature>
<feature type="binding site" evidence="1">
    <location>
        <position position="142"/>
    </location>
    <ligand>
        <name>N-acetyl-alpha-D-glucosamine 1-phosphate</name>
        <dbReference type="ChEBI" id="CHEBI:57776"/>
    </ligand>
</feature>
<feature type="binding site" evidence="1">
    <location>
        <position position="158"/>
    </location>
    <ligand>
        <name>N-acetyl-alpha-D-glucosamine 1-phosphate</name>
        <dbReference type="ChEBI" id="CHEBI:57776"/>
    </ligand>
</feature>
<feature type="binding site" evidence="1">
    <location>
        <position position="384"/>
    </location>
    <ligand>
        <name>acetyl-CoA</name>
        <dbReference type="ChEBI" id="CHEBI:57288"/>
    </ligand>
</feature>
<feature type="binding site" evidence="1">
    <location>
        <position position="401"/>
    </location>
    <ligand>
        <name>acetyl-CoA</name>
        <dbReference type="ChEBI" id="CHEBI:57288"/>
    </ligand>
</feature>
<reference key="1">
    <citation type="submission" date="2007-03" db="EMBL/GenBank/DDBJ databases">
        <title>Complete sequence of chromosome of Methanococcus maripaludis C5.</title>
        <authorList>
            <consortium name="US DOE Joint Genome Institute"/>
            <person name="Copeland A."/>
            <person name="Lucas S."/>
            <person name="Lapidus A."/>
            <person name="Barry K."/>
            <person name="Glavina del Rio T."/>
            <person name="Dalin E."/>
            <person name="Tice H."/>
            <person name="Pitluck S."/>
            <person name="Chertkov O."/>
            <person name="Brettin T."/>
            <person name="Bruce D."/>
            <person name="Han C."/>
            <person name="Detter J.C."/>
            <person name="Schmutz J."/>
            <person name="Larimer F."/>
            <person name="Land M."/>
            <person name="Hauser L."/>
            <person name="Kyrpides N."/>
            <person name="Mikhailova N."/>
            <person name="Sieprawska-Lupa M."/>
            <person name="Whitman W.B."/>
            <person name="Richardson P."/>
        </authorList>
    </citation>
    <scope>NUCLEOTIDE SEQUENCE [LARGE SCALE GENOMIC DNA]</scope>
    <source>
        <strain>C5 / ATCC BAA-1333</strain>
    </source>
</reference>
<sequence length="411" mass="45344">MDAIILCAGKGTRLHPITESRPKPMIPIAGKPILEHIIEKIENHVEKIYLVVGFEKEKIIEYFNENPKIEYILQEKQLGTGHAVLTAKNFIKDDFLVLNGDVIFEDSIDEILDYENAVALSKVDNPENFGVIELGYDNKVINLLEKPKKEELTSNFINAGIYKLQNSVFGILENLVPSERGEIELTDALKKLIEIGKLHGVELNGYWNDIGHPWDVLSANSHFLNKIISKISGKIENNVSITGNVIIEEGAVIKSNSVIEGPVIIKSGSIVGPLAYIRPNTILMENNFVGNSSEIKGSIIFENTKIPHLSYVGDSIIGANCNFGCNTITANLRFDNKPVIVNIKGKPVKSVRKLGAIIGDNVKSGIQVSFMPGVKIGSNSLIGANCLIDSDIEQESFVYKKDELVITKKRN</sequence>
<keyword id="KW-0012">Acyltransferase</keyword>
<keyword id="KW-0511">Multifunctional enzyme</keyword>
<keyword id="KW-0548">Nucleotidyltransferase</keyword>
<keyword id="KW-0677">Repeat</keyword>
<keyword id="KW-0808">Transferase</keyword>
<dbReference type="EC" id="2.7.7.23"/>
<dbReference type="EC" id="2.3.1.157"/>
<dbReference type="EMBL" id="CP000609">
    <property type="protein sequence ID" value="ABO34827.1"/>
    <property type="molecule type" value="Genomic_DNA"/>
</dbReference>
<dbReference type="RefSeq" id="WP_011868282.1">
    <property type="nucleotide sequence ID" value="NC_009135.1"/>
</dbReference>
<dbReference type="SMR" id="A4FX98"/>
<dbReference type="STRING" id="402880.MmarC5_0513"/>
<dbReference type="GeneID" id="4927754"/>
<dbReference type="KEGG" id="mmq:MmarC5_0513"/>
<dbReference type="eggNOG" id="arCOG00666">
    <property type="taxonomic scope" value="Archaea"/>
</dbReference>
<dbReference type="HOGENOM" id="CLU_029499_0_1_2"/>
<dbReference type="OrthoDB" id="15372at2157"/>
<dbReference type="UniPathway" id="UPA00113">
    <property type="reaction ID" value="UER00532"/>
</dbReference>
<dbReference type="UniPathway" id="UPA00113">
    <property type="reaction ID" value="UER00533"/>
</dbReference>
<dbReference type="Proteomes" id="UP000000253">
    <property type="component" value="Chromosome"/>
</dbReference>
<dbReference type="GO" id="GO:0019134">
    <property type="term" value="F:glucosamine-1-phosphate N-acetyltransferase activity"/>
    <property type="evidence" value="ECO:0007669"/>
    <property type="project" value="UniProtKB-EC"/>
</dbReference>
<dbReference type="GO" id="GO:0003977">
    <property type="term" value="F:UDP-N-acetylglucosamine diphosphorylase activity"/>
    <property type="evidence" value="ECO:0007669"/>
    <property type="project" value="UniProtKB-EC"/>
</dbReference>
<dbReference type="GO" id="GO:0006048">
    <property type="term" value="P:UDP-N-acetylglucosamine biosynthetic process"/>
    <property type="evidence" value="ECO:0007669"/>
    <property type="project" value="UniProtKB-UniPathway"/>
</dbReference>
<dbReference type="CDD" id="cd05636">
    <property type="entry name" value="LbH_G1P_TT_C_like"/>
    <property type="match status" value="1"/>
</dbReference>
<dbReference type="CDD" id="cd04181">
    <property type="entry name" value="NTP_transferase"/>
    <property type="match status" value="1"/>
</dbReference>
<dbReference type="Gene3D" id="2.160.10.10">
    <property type="entry name" value="Hexapeptide repeat proteins"/>
    <property type="match status" value="1"/>
</dbReference>
<dbReference type="Gene3D" id="3.90.550.10">
    <property type="entry name" value="Spore Coat Polysaccharide Biosynthesis Protein SpsA, Chain A"/>
    <property type="match status" value="1"/>
</dbReference>
<dbReference type="InterPro" id="IPR023915">
    <property type="entry name" value="Bifunctiontional_GlmU_arc-type"/>
</dbReference>
<dbReference type="InterPro" id="IPR050065">
    <property type="entry name" value="GlmU-like"/>
</dbReference>
<dbReference type="InterPro" id="IPR001451">
    <property type="entry name" value="Hexapep"/>
</dbReference>
<dbReference type="InterPro" id="IPR005835">
    <property type="entry name" value="NTP_transferase_dom"/>
</dbReference>
<dbReference type="InterPro" id="IPR029044">
    <property type="entry name" value="Nucleotide-diphossugar_trans"/>
</dbReference>
<dbReference type="InterPro" id="IPR011004">
    <property type="entry name" value="Trimer_LpxA-like_sf"/>
</dbReference>
<dbReference type="NCBIfam" id="TIGR03992">
    <property type="entry name" value="Arch_glmU"/>
    <property type="match status" value="1"/>
</dbReference>
<dbReference type="PANTHER" id="PTHR43584:SF8">
    <property type="entry name" value="N-ACETYLMURAMATE ALPHA-1-PHOSPHATE URIDYLYLTRANSFERASE"/>
    <property type="match status" value="1"/>
</dbReference>
<dbReference type="PANTHER" id="PTHR43584">
    <property type="entry name" value="NUCLEOTIDYL TRANSFERASE"/>
    <property type="match status" value="1"/>
</dbReference>
<dbReference type="Pfam" id="PF00132">
    <property type="entry name" value="Hexapep"/>
    <property type="match status" value="1"/>
</dbReference>
<dbReference type="Pfam" id="PF00483">
    <property type="entry name" value="NTP_transferase"/>
    <property type="match status" value="1"/>
</dbReference>
<dbReference type="SUPFAM" id="SSF53448">
    <property type="entry name" value="Nucleotide-diphospho-sugar transferases"/>
    <property type="match status" value="1"/>
</dbReference>
<dbReference type="SUPFAM" id="SSF51161">
    <property type="entry name" value="Trimeric LpxA-like enzymes"/>
    <property type="match status" value="1"/>
</dbReference>
<protein>
    <recommendedName>
        <fullName>Bifunctional protein GlmU</fullName>
    </recommendedName>
    <domain>
        <recommendedName>
            <fullName>UDP-N-acetylglucosamine pyrophosphorylase</fullName>
            <ecNumber>2.7.7.23</ecNumber>
        </recommendedName>
        <alternativeName>
            <fullName>N-acetylglucosamine-1-phosphate uridyltransferase</fullName>
        </alternativeName>
    </domain>
    <domain>
        <recommendedName>
            <fullName>Glucosamine-1-phosphate N-acetyltransferase</fullName>
            <ecNumber>2.3.1.157</ecNumber>
        </recommendedName>
    </domain>
</protein>
<evidence type="ECO:0000250" key="1"/>
<evidence type="ECO:0000305" key="2"/>
<comment type="function">
    <text evidence="1">Catalyzes the last two sequential reactions in the de novo biosynthetic pathway for UDP-N-acetyl-glucosamine (UDP-GlcNAc). Responsible for the acetylation of GlcN-1-P to GlcNAc-1-P, and for the uridyl transfer from UTP to GlcNAc-1-P, to produce UDP-GlcNAc and pyrophosphate (By similarity).</text>
</comment>
<comment type="catalytic activity">
    <reaction>
        <text>N-acetyl-alpha-D-glucosamine 1-phosphate + UTP + H(+) = UDP-N-acetyl-alpha-D-glucosamine + diphosphate</text>
        <dbReference type="Rhea" id="RHEA:13509"/>
        <dbReference type="ChEBI" id="CHEBI:15378"/>
        <dbReference type="ChEBI" id="CHEBI:33019"/>
        <dbReference type="ChEBI" id="CHEBI:46398"/>
        <dbReference type="ChEBI" id="CHEBI:57705"/>
        <dbReference type="ChEBI" id="CHEBI:57776"/>
        <dbReference type="EC" id="2.7.7.23"/>
    </reaction>
</comment>
<comment type="catalytic activity">
    <reaction>
        <text>alpha-D-glucosamine 1-phosphate + acetyl-CoA = N-acetyl-alpha-D-glucosamine 1-phosphate + CoA + H(+)</text>
        <dbReference type="Rhea" id="RHEA:13725"/>
        <dbReference type="ChEBI" id="CHEBI:15378"/>
        <dbReference type="ChEBI" id="CHEBI:57287"/>
        <dbReference type="ChEBI" id="CHEBI:57288"/>
        <dbReference type="ChEBI" id="CHEBI:57776"/>
        <dbReference type="ChEBI" id="CHEBI:58516"/>
        <dbReference type="EC" id="2.3.1.157"/>
    </reaction>
</comment>
<comment type="pathway">
    <text>Nucleotide-sugar biosynthesis; UDP-N-acetyl-alpha-D-glucosamine biosynthesis; N-acetyl-alpha-D-glucosamine 1-phosphate from alpha-D-glucosamine 6-phosphate (route II): step 2/2.</text>
</comment>
<comment type="pathway">
    <text>Nucleotide-sugar biosynthesis; UDP-N-acetyl-alpha-D-glucosamine biosynthesis; UDP-N-acetyl-alpha-D-glucosamine from N-acetyl-alpha-D-glucosamine 1-phosphate: step 1/1.</text>
</comment>
<comment type="similarity">
    <text evidence="2">In the N-terminal section; belongs to the N-acetylglucosamine-1-phosphate uridyltransferase family.</text>
</comment>
<comment type="similarity">
    <text evidence="2">In the C-terminal section; belongs to the transferase hexapeptide repeat family.</text>
</comment>